<gene>
    <name evidence="1" type="primary">ade</name>
    <name type="ordered locus">Sfum_0417</name>
</gene>
<organism>
    <name type="scientific">Syntrophobacter fumaroxidans (strain DSM 10017 / MPOB)</name>
    <dbReference type="NCBI Taxonomy" id="335543"/>
    <lineage>
        <taxon>Bacteria</taxon>
        <taxon>Pseudomonadati</taxon>
        <taxon>Thermodesulfobacteriota</taxon>
        <taxon>Syntrophobacteria</taxon>
        <taxon>Syntrophobacterales</taxon>
        <taxon>Syntrophobacteraceae</taxon>
        <taxon>Syntrophobacter</taxon>
    </lineage>
</organism>
<sequence length="576" mass="61529">MKWDTGRMARIIEAAQGKRVVDLCIRRCRLVNVLSGSIDTVDLAIHEGFVAGWGSYRAAREIDADGMYVCPGFIDGHIHIESTLLAPAQFCAAAVPQGTAAVVADPHEIANVLGLSGIRYFLEASEGLPLDFFFNLPSCVPATPLETSGAALRAPDLDALLPHERLIGLAEMMNFPGVLSGFPDVIDKLLLFQARRIDGHAPQLGDLGLNAYVAAGITSDHECTTLEEAREKLAKGMTVMIREGGQSRDLAALLPAVDEHTWPRCCFVSDDVHPDGLLREGHMNVIVNRAMSLGMAPVRALSLAALTPARHFRLDRRGALAPGYHADFSMSPTLNPWQPERVFKAGVEVARDGRLLLDLGNGNGVAAPPSPMHITRLLAEDLVVPAQPGLLRIIGVREGTLLTRKIVLPPKIHEGAAVADLDRDILKLAVYNRYVPDRPPAVAFVQGLGLKEGAIATTVAHDSHNLIVAGASDADILHVVDAVRKSGGGMAAGRTGAEVDVLALPIAGLMSDQPVERVAERLEQLQGRARAAGSGLRNPFMALSFLALPVIPELKLTDLGLIDVSTFSPVSLFETS</sequence>
<evidence type="ECO:0000255" key="1">
    <source>
        <dbReference type="HAMAP-Rule" id="MF_01518"/>
    </source>
</evidence>
<keyword id="KW-0378">Hydrolase</keyword>
<keyword id="KW-0464">Manganese</keyword>
<keyword id="KW-1185">Reference proteome</keyword>
<protein>
    <recommendedName>
        <fullName evidence="1">Adenine deaminase</fullName>
        <shortName evidence="1">Adenase</shortName>
        <shortName evidence="1">Adenine aminase</shortName>
        <ecNumber evidence="1">3.5.4.2</ecNumber>
    </recommendedName>
</protein>
<accession>A0LFB5</accession>
<dbReference type="EC" id="3.5.4.2" evidence="1"/>
<dbReference type="EMBL" id="CP000478">
    <property type="protein sequence ID" value="ABK16117.1"/>
    <property type="molecule type" value="Genomic_DNA"/>
</dbReference>
<dbReference type="RefSeq" id="WP_011697290.1">
    <property type="nucleotide sequence ID" value="NC_008554.1"/>
</dbReference>
<dbReference type="SMR" id="A0LFB5"/>
<dbReference type="FunCoup" id="A0LFB5">
    <property type="interactions" value="107"/>
</dbReference>
<dbReference type="STRING" id="335543.Sfum_0417"/>
<dbReference type="KEGG" id="sfu:Sfum_0417"/>
<dbReference type="eggNOG" id="COG1001">
    <property type="taxonomic scope" value="Bacteria"/>
</dbReference>
<dbReference type="HOGENOM" id="CLU_027935_0_0_7"/>
<dbReference type="InParanoid" id="A0LFB5"/>
<dbReference type="Proteomes" id="UP000001784">
    <property type="component" value="Chromosome"/>
</dbReference>
<dbReference type="GO" id="GO:0000034">
    <property type="term" value="F:adenine deaminase activity"/>
    <property type="evidence" value="ECO:0007669"/>
    <property type="project" value="UniProtKB-UniRule"/>
</dbReference>
<dbReference type="GO" id="GO:0006146">
    <property type="term" value="P:adenine catabolic process"/>
    <property type="evidence" value="ECO:0007669"/>
    <property type="project" value="InterPro"/>
</dbReference>
<dbReference type="CDD" id="cd01295">
    <property type="entry name" value="AdeC"/>
    <property type="match status" value="1"/>
</dbReference>
<dbReference type="Gene3D" id="3.20.20.140">
    <property type="entry name" value="Metal-dependent hydrolases"/>
    <property type="match status" value="1"/>
</dbReference>
<dbReference type="Gene3D" id="2.30.40.10">
    <property type="entry name" value="Urease, subunit C, domain 1"/>
    <property type="match status" value="1"/>
</dbReference>
<dbReference type="HAMAP" id="MF_01518">
    <property type="entry name" value="Adenine_deamin"/>
    <property type="match status" value="1"/>
</dbReference>
<dbReference type="InterPro" id="IPR006679">
    <property type="entry name" value="Adenine_deam"/>
</dbReference>
<dbReference type="InterPro" id="IPR026912">
    <property type="entry name" value="Adenine_deam_C"/>
</dbReference>
<dbReference type="InterPro" id="IPR006680">
    <property type="entry name" value="Amidohydro-rel"/>
</dbReference>
<dbReference type="InterPro" id="IPR011059">
    <property type="entry name" value="Metal-dep_hydrolase_composite"/>
</dbReference>
<dbReference type="InterPro" id="IPR032466">
    <property type="entry name" value="Metal_Hydrolase"/>
</dbReference>
<dbReference type="NCBIfam" id="TIGR01178">
    <property type="entry name" value="ade"/>
    <property type="match status" value="1"/>
</dbReference>
<dbReference type="PANTHER" id="PTHR11113:SF2">
    <property type="entry name" value="ADENINE DEAMINASE"/>
    <property type="match status" value="1"/>
</dbReference>
<dbReference type="PANTHER" id="PTHR11113">
    <property type="entry name" value="N-ACETYLGLUCOSAMINE-6-PHOSPHATE DEACETYLASE"/>
    <property type="match status" value="1"/>
</dbReference>
<dbReference type="Pfam" id="PF13382">
    <property type="entry name" value="Adenine_deam_C"/>
    <property type="match status" value="1"/>
</dbReference>
<dbReference type="Pfam" id="PF01979">
    <property type="entry name" value="Amidohydro_1"/>
    <property type="match status" value="1"/>
</dbReference>
<dbReference type="SUPFAM" id="SSF51338">
    <property type="entry name" value="Composite domain of metallo-dependent hydrolases"/>
    <property type="match status" value="1"/>
</dbReference>
<dbReference type="SUPFAM" id="SSF51556">
    <property type="entry name" value="Metallo-dependent hydrolases"/>
    <property type="match status" value="1"/>
</dbReference>
<reference key="1">
    <citation type="submission" date="2006-10" db="EMBL/GenBank/DDBJ databases">
        <title>Complete sequence of Syntrophobacter fumaroxidans MPOB.</title>
        <authorList>
            <consortium name="US DOE Joint Genome Institute"/>
            <person name="Copeland A."/>
            <person name="Lucas S."/>
            <person name="Lapidus A."/>
            <person name="Barry K."/>
            <person name="Detter J.C."/>
            <person name="Glavina del Rio T."/>
            <person name="Hammon N."/>
            <person name="Israni S."/>
            <person name="Pitluck S."/>
            <person name="Goltsman E.G."/>
            <person name="Martinez M."/>
            <person name="Schmutz J."/>
            <person name="Larimer F."/>
            <person name="Land M."/>
            <person name="Hauser L."/>
            <person name="Kyrpides N."/>
            <person name="Kim E."/>
            <person name="Boone D.R."/>
            <person name="Brockman F."/>
            <person name="Culley D."/>
            <person name="Ferry J."/>
            <person name="Gunsalus R."/>
            <person name="McInerney M.J."/>
            <person name="Morrison M."/>
            <person name="Plugge C."/>
            <person name="Rohlin L."/>
            <person name="Scholten J."/>
            <person name="Sieber J."/>
            <person name="Stams A.J.M."/>
            <person name="Worm P."/>
            <person name="Henstra A.M."/>
            <person name="Richardson P."/>
        </authorList>
    </citation>
    <scope>NUCLEOTIDE SEQUENCE [LARGE SCALE GENOMIC DNA]</scope>
    <source>
        <strain>DSM 10017 / MPOB</strain>
    </source>
</reference>
<proteinExistence type="inferred from homology"/>
<comment type="catalytic activity">
    <reaction evidence="1">
        <text>adenine + H2O + H(+) = hypoxanthine + NH4(+)</text>
        <dbReference type="Rhea" id="RHEA:23688"/>
        <dbReference type="ChEBI" id="CHEBI:15377"/>
        <dbReference type="ChEBI" id="CHEBI:15378"/>
        <dbReference type="ChEBI" id="CHEBI:16708"/>
        <dbReference type="ChEBI" id="CHEBI:17368"/>
        <dbReference type="ChEBI" id="CHEBI:28938"/>
        <dbReference type="EC" id="3.5.4.2"/>
    </reaction>
</comment>
<comment type="cofactor">
    <cofactor evidence="1">
        <name>Mn(2+)</name>
        <dbReference type="ChEBI" id="CHEBI:29035"/>
    </cofactor>
</comment>
<comment type="similarity">
    <text evidence="1">Belongs to the metallo-dependent hydrolases superfamily. Adenine deaminase family.</text>
</comment>
<name>ADEC_SYNFM</name>
<feature type="chain" id="PRO_0000292401" description="Adenine deaminase">
    <location>
        <begin position="1"/>
        <end position="576"/>
    </location>
</feature>